<reference key="1">
    <citation type="journal article" date="2000" name="J. Mol. Evol.">
        <title>Phylogenetic depth of the bacterial genera Aquifex and Thermotoga inferred from analysis of ribosomal protein, elongation factor, and RNA polymerase subunit sequences.</title>
        <authorList>
            <person name="Bocchetta M."/>
            <person name="Gribaldo S."/>
            <person name="Sanangelantoni A.M."/>
            <person name="Cammarano P."/>
        </authorList>
    </citation>
    <scope>NUCLEOTIDE SEQUENCE [GENOMIC DNA]</scope>
    <source>
        <strain>DSM 6858 / JCM 9492 / Kol5A</strain>
    </source>
</reference>
<sequence length="49" mass="5475">MEKAEKGNPKGKAFRGNKLAFGEYGIQALDRAWITQQQIEAVRVALVRS</sequence>
<evidence type="ECO:0000250" key="1"/>
<evidence type="ECO:0000305" key="2"/>
<keyword id="KW-0687">Ribonucleoprotein</keyword>
<keyword id="KW-0689">Ribosomal protein</keyword>
<keyword id="KW-0694">RNA-binding</keyword>
<keyword id="KW-0699">rRNA-binding</keyword>
<keyword id="KW-0820">tRNA-binding</keyword>
<comment type="function">
    <text evidence="1">Binds 23S rRNA and is also seen to make contacts with the A and possibly P site tRNAs.</text>
</comment>
<comment type="subunit">
    <text evidence="1">Part of the 50S ribosomal subunit.</text>
</comment>
<comment type="similarity">
    <text evidence="2">Belongs to the universal ribosomal protein uL16 family.</text>
</comment>
<protein>
    <recommendedName>
        <fullName evidence="2">Large ribosomal subunit protein uL16</fullName>
    </recommendedName>
    <alternativeName>
        <fullName>50S ribosomal protein L16</fullName>
    </alternativeName>
</protein>
<proteinExistence type="inferred from homology"/>
<feature type="chain" id="PRO_0000062033" description="Large ribosomal subunit protein uL16">
    <location>
        <begin position="1"/>
        <end position="49" status="greater than"/>
    </location>
</feature>
<feature type="non-terminal residue">
    <location>
        <position position="49"/>
    </location>
</feature>
<organism>
    <name type="scientific">Aquifex pyrophilus</name>
    <dbReference type="NCBI Taxonomy" id="2714"/>
    <lineage>
        <taxon>Bacteria</taxon>
        <taxon>Pseudomonadati</taxon>
        <taxon>Aquificota</taxon>
        <taxon>Aquificia</taxon>
        <taxon>Aquificales</taxon>
        <taxon>Aquificaceae</taxon>
        <taxon>Aquifex</taxon>
    </lineage>
</organism>
<gene>
    <name type="primary">rplP</name>
    <name type="synonym">rpl16</name>
</gene>
<name>RL16_AQUPY</name>
<accession>Q9ZI43</accession>
<dbReference type="EMBL" id="AF040100">
    <property type="protein sequence ID" value="AAD08792.1"/>
    <property type="molecule type" value="Genomic_DNA"/>
</dbReference>
<dbReference type="SMR" id="Q9ZI43"/>
<dbReference type="GO" id="GO:1990904">
    <property type="term" value="C:ribonucleoprotein complex"/>
    <property type="evidence" value="ECO:0007669"/>
    <property type="project" value="UniProtKB-KW"/>
</dbReference>
<dbReference type="GO" id="GO:0005840">
    <property type="term" value="C:ribosome"/>
    <property type="evidence" value="ECO:0007669"/>
    <property type="project" value="UniProtKB-KW"/>
</dbReference>
<dbReference type="GO" id="GO:0019843">
    <property type="term" value="F:rRNA binding"/>
    <property type="evidence" value="ECO:0007669"/>
    <property type="project" value="UniProtKB-KW"/>
</dbReference>
<dbReference type="GO" id="GO:0003735">
    <property type="term" value="F:structural constituent of ribosome"/>
    <property type="evidence" value="ECO:0007669"/>
    <property type="project" value="InterPro"/>
</dbReference>
<dbReference type="GO" id="GO:0000049">
    <property type="term" value="F:tRNA binding"/>
    <property type="evidence" value="ECO:0007669"/>
    <property type="project" value="UniProtKB-KW"/>
</dbReference>
<dbReference type="GO" id="GO:0006412">
    <property type="term" value="P:translation"/>
    <property type="evidence" value="ECO:0007669"/>
    <property type="project" value="InterPro"/>
</dbReference>
<dbReference type="Gene3D" id="3.90.1170.10">
    <property type="entry name" value="Ribosomal protein L10e/L16"/>
    <property type="match status" value="1"/>
</dbReference>
<dbReference type="InterPro" id="IPR047873">
    <property type="entry name" value="Ribosomal_uL16"/>
</dbReference>
<dbReference type="InterPro" id="IPR000114">
    <property type="entry name" value="Ribosomal_uL16_bact-type"/>
</dbReference>
<dbReference type="InterPro" id="IPR036920">
    <property type="entry name" value="Ribosomal_uL16_sf"/>
</dbReference>
<dbReference type="Pfam" id="PF00252">
    <property type="entry name" value="Ribosomal_L16"/>
    <property type="match status" value="1"/>
</dbReference>
<dbReference type="PRINTS" id="PR00060">
    <property type="entry name" value="RIBOSOMALL16"/>
</dbReference>
<dbReference type="SUPFAM" id="SSF54686">
    <property type="entry name" value="Ribosomal protein L16p/L10e"/>
    <property type="match status" value="1"/>
</dbReference>